<organism>
    <name type="scientific">Streptococcus pneumoniae (strain 70585)</name>
    <dbReference type="NCBI Taxonomy" id="488221"/>
    <lineage>
        <taxon>Bacteria</taxon>
        <taxon>Bacillati</taxon>
        <taxon>Bacillota</taxon>
        <taxon>Bacilli</taxon>
        <taxon>Lactobacillales</taxon>
        <taxon>Streptococcaceae</taxon>
        <taxon>Streptococcus</taxon>
    </lineage>
</organism>
<sequence>MAQLTVQIVTPDGLVYDHHASYVSVRTLDGEMGILPRHENMIAVLAVDEVKVKRIDDKDHVNWIAVNGGVIEIANDMITIVADSAERARDIDISRAERAKLRAERAIEEAQDKHLIDQERRAKIALQRAINRINVGNRL</sequence>
<name>ATPE_STRP7</name>
<protein>
    <recommendedName>
        <fullName evidence="1">ATP synthase epsilon chain</fullName>
    </recommendedName>
    <alternativeName>
        <fullName evidence="1">ATP synthase F1 sector epsilon subunit</fullName>
    </alternativeName>
    <alternativeName>
        <fullName evidence="1">F-ATPase epsilon subunit</fullName>
    </alternativeName>
</protein>
<keyword id="KW-0066">ATP synthesis</keyword>
<keyword id="KW-1003">Cell membrane</keyword>
<keyword id="KW-0139">CF(1)</keyword>
<keyword id="KW-0375">Hydrogen ion transport</keyword>
<keyword id="KW-0406">Ion transport</keyword>
<keyword id="KW-0472">Membrane</keyword>
<keyword id="KW-0813">Transport</keyword>
<dbReference type="EMBL" id="CP000918">
    <property type="protein sequence ID" value="ACO17266.1"/>
    <property type="molecule type" value="Genomic_DNA"/>
</dbReference>
<dbReference type="RefSeq" id="WP_000068050.1">
    <property type="nucleotide sequence ID" value="NC_012468.1"/>
</dbReference>
<dbReference type="SMR" id="C1C898"/>
<dbReference type="KEGG" id="snm:SP70585_1544"/>
<dbReference type="HOGENOM" id="CLU_084338_1_0_9"/>
<dbReference type="Proteomes" id="UP000002211">
    <property type="component" value="Chromosome"/>
</dbReference>
<dbReference type="GO" id="GO:0005886">
    <property type="term" value="C:plasma membrane"/>
    <property type="evidence" value="ECO:0007669"/>
    <property type="project" value="UniProtKB-SubCell"/>
</dbReference>
<dbReference type="GO" id="GO:0045259">
    <property type="term" value="C:proton-transporting ATP synthase complex"/>
    <property type="evidence" value="ECO:0007669"/>
    <property type="project" value="UniProtKB-KW"/>
</dbReference>
<dbReference type="GO" id="GO:0005524">
    <property type="term" value="F:ATP binding"/>
    <property type="evidence" value="ECO:0007669"/>
    <property type="project" value="UniProtKB-UniRule"/>
</dbReference>
<dbReference type="GO" id="GO:0046933">
    <property type="term" value="F:proton-transporting ATP synthase activity, rotational mechanism"/>
    <property type="evidence" value="ECO:0007669"/>
    <property type="project" value="UniProtKB-UniRule"/>
</dbReference>
<dbReference type="CDD" id="cd12152">
    <property type="entry name" value="F1-ATPase_delta"/>
    <property type="match status" value="1"/>
</dbReference>
<dbReference type="FunFam" id="1.20.5.440:FF:000001">
    <property type="entry name" value="ATP synthase epsilon chain"/>
    <property type="match status" value="1"/>
</dbReference>
<dbReference type="Gene3D" id="1.20.5.440">
    <property type="entry name" value="ATP synthase delta/epsilon subunit, C-terminal domain"/>
    <property type="match status" value="1"/>
</dbReference>
<dbReference type="Gene3D" id="2.60.15.10">
    <property type="entry name" value="F0F1 ATP synthase delta/epsilon subunit, N-terminal"/>
    <property type="match status" value="1"/>
</dbReference>
<dbReference type="HAMAP" id="MF_00530">
    <property type="entry name" value="ATP_synth_epsil_bac"/>
    <property type="match status" value="1"/>
</dbReference>
<dbReference type="InterPro" id="IPR001469">
    <property type="entry name" value="ATP_synth_F1_dsu/esu"/>
</dbReference>
<dbReference type="InterPro" id="IPR020546">
    <property type="entry name" value="ATP_synth_F1_dsu/esu_N"/>
</dbReference>
<dbReference type="InterPro" id="IPR020547">
    <property type="entry name" value="ATP_synth_F1_esu_C"/>
</dbReference>
<dbReference type="InterPro" id="IPR036771">
    <property type="entry name" value="ATPsynth_dsu/esu_N"/>
</dbReference>
<dbReference type="NCBIfam" id="TIGR01216">
    <property type="entry name" value="ATP_synt_epsi"/>
    <property type="match status" value="1"/>
</dbReference>
<dbReference type="NCBIfam" id="NF001846">
    <property type="entry name" value="PRK00571.1-3"/>
    <property type="match status" value="1"/>
</dbReference>
<dbReference type="PANTHER" id="PTHR13822">
    <property type="entry name" value="ATP SYNTHASE DELTA/EPSILON CHAIN"/>
    <property type="match status" value="1"/>
</dbReference>
<dbReference type="PANTHER" id="PTHR13822:SF10">
    <property type="entry name" value="ATP SYNTHASE EPSILON CHAIN, CHLOROPLASTIC"/>
    <property type="match status" value="1"/>
</dbReference>
<dbReference type="Pfam" id="PF00401">
    <property type="entry name" value="ATP-synt_DE"/>
    <property type="match status" value="1"/>
</dbReference>
<dbReference type="Pfam" id="PF02823">
    <property type="entry name" value="ATP-synt_DE_N"/>
    <property type="match status" value="1"/>
</dbReference>
<dbReference type="SUPFAM" id="SSF51344">
    <property type="entry name" value="Epsilon subunit of F1F0-ATP synthase N-terminal domain"/>
    <property type="match status" value="1"/>
</dbReference>
<feature type="chain" id="PRO_1000146349" description="ATP synthase epsilon chain">
    <location>
        <begin position="1"/>
        <end position="139"/>
    </location>
</feature>
<evidence type="ECO:0000255" key="1">
    <source>
        <dbReference type="HAMAP-Rule" id="MF_00530"/>
    </source>
</evidence>
<comment type="function">
    <text evidence="1">Produces ATP from ADP in the presence of a proton gradient across the membrane.</text>
</comment>
<comment type="subunit">
    <text evidence="1">F-type ATPases have 2 components, CF(1) - the catalytic core - and CF(0) - the membrane proton channel. CF(1) has five subunits: alpha(3), beta(3), gamma(1), delta(1), epsilon(1). CF(0) has three main subunits: a, b and c.</text>
</comment>
<comment type="subcellular location">
    <subcellularLocation>
        <location evidence="1">Cell membrane</location>
        <topology evidence="1">Peripheral membrane protein</topology>
    </subcellularLocation>
</comment>
<comment type="similarity">
    <text evidence="1">Belongs to the ATPase epsilon chain family.</text>
</comment>
<reference key="1">
    <citation type="journal article" date="2010" name="Genome Biol.">
        <title>Structure and dynamics of the pan-genome of Streptococcus pneumoniae and closely related species.</title>
        <authorList>
            <person name="Donati C."/>
            <person name="Hiller N.L."/>
            <person name="Tettelin H."/>
            <person name="Muzzi A."/>
            <person name="Croucher N.J."/>
            <person name="Angiuoli S.V."/>
            <person name="Oggioni M."/>
            <person name="Dunning Hotopp J.C."/>
            <person name="Hu F.Z."/>
            <person name="Riley D.R."/>
            <person name="Covacci A."/>
            <person name="Mitchell T.J."/>
            <person name="Bentley S.D."/>
            <person name="Kilian M."/>
            <person name="Ehrlich G.D."/>
            <person name="Rappuoli R."/>
            <person name="Moxon E.R."/>
            <person name="Masignani V."/>
        </authorList>
    </citation>
    <scope>NUCLEOTIDE SEQUENCE [LARGE SCALE GENOMIC DNA]</scope>
    <source>
        <strain>70585</strain>
    </source>
</reference>
<gene>
    <name evidence="1" type="primary">atpC</name>
    <name type="ordered locus">SP70585_1544</name>
</gene>
<proteinExistence type="inferred from homology"/>
<accession>C1C898</accession>